<evidence type="ECO:0000256" key="1">
    <source>
        <dbReference type="SAM" id="MobiDB-lite"/>
    </source>
</evidence>
<evidence type="ECO:0000269" key="2">
    <source>
    </source>
</evidence>
<evidence type="ECO:0000269" key="3">
    <source>
    </source>
</evidence>
<keyword id="KW-0903">Direct protein sequencing</keyword>
<keyword id="KW-1185">Reference proteome</keyword>
<keyword id="KW-0677">Repeat</keyword>
<keyword id="KW-0749">Sporulation</keyword>
<reference key="1">
    <citation type="journal article" date="1997" name="Nature">
        <title>The complete genome sequence of the Gram-positive bacterium Bacillus subtilis.</title>
        <authorList>
            <person name="Kunst F."/>
            <person name="Ogasawara N."/>
            <person name="Moszer I."/>
            <person name="Albertini A.M."/>
            <person name="Alloni G."/>
            <person name="Azevedo V."/>
            <person name="Bertero M.G."/>
            <person name="Bessieres P."/>
            <person name="Bolotin A."/>
            <person name="Borchert S."/>
            <person name="Borriss R."/>
            <person name="Boursier L."/>
            <person name="Brans A."/>
            <person name="Braun M."/>
            <person name="Brignell S.C."/>
            <person name="Bron S."/>
            <person name="Brouillet S."/>
            <person name="Bruschi C.V."/>
            <person name="Caldwell B."/>
            <person name="Capuano V."/>
            <person name="Carter N.M."/>
            <person name="Choi S.-K."/>
            <person name="Codani J.-J."/>
            <person name="Connerton I.F."/>
            <person name="Cummings N.J."/>
            <person name="Daniel R.A."/>
            <person name="Denizot F."/>
            <person name="Devine K.M."/>
            <person name="Duesterhoeft A."/>
            <person name="Ehrlich S.D."/>
            <person name="Emmerson P.T."/>
            <person name="Entian K.-D."/>
            <person name="Errington J."/>
            <person name="Fabret C."/>
            <person name="Ferrari E."/>
            <person name="Foulger D."/>
            <person name="Fritz C."/>
            <person name="Fujita M."/>
            <person name="Fujita Y."/>
            <person name="Fuma S."/>
            <person name="Galizzi A."/>
            <person name="Galleron N."/>
            <person name="Ghim S.-Y."/>
            <person name="Glaser P."/>
            <person name="Goffeau A."/>
            <person name="Golightly E.J."/>
            <person name="Grandi G."/>
            <person name="Guiseppi G."/>
            <person name="Guy B.J."/>
            <person name="Haga K."/>
            <person name="Haiech J."/>
            <person name="Harwood C.R."/>
            <person name="Henaut A."/>
            <person name="Hilbert H."/>
            <person name="Holsappel S."/>
            <person name="Hosono S."/>
            <person name="Hullo M.-F."/>
            <person name="Itaya M."/>
            <person name="Jones L.-M."/>
            <person name="Joris B."/>
            <person name="Karamata D."/>
            <person name="Kasahara Y."/>
            <person name="Klaerr-Blanchard M."/>
            <person name="Klein C."/>
            <person name="Kobayashi Y."/>
            <person name="Koetter P."/>
            <person name="Koningstein G."/>
            <person name="Krogh S."/>
            <person name="Kumano M."/>
            <person name="Kurita K."/>
            <person name="Lapidus A."/>
            <person name="Lardinois S."/>
            <person name="Lauber J."/>
            <person name="Lazarevic V."/>
            <person name="Lee S.-M."/>
            <person name="Levine A."/>
            <person name="Liu H."/>
            <person name="Masuda S."/>
            <person name="Mauel C."/>
            <person name="Medigue C."/>
            <person name="Medina N."/>
            <person name="Mellado R.P."/>
            <person name="Mizuno M."/>
            <person name="Moestl D."/>
            <person name="Nakai S."/>
            <person name="Noback M."/>
            <person name="Noone D."/>
            <person name="O'Reilly M."/>
            <person name="Ogawa K."/>
            <person name="Ogiwara A."/>
            <person name="Oudega B."/>
            <person name="Park S.-H."/>
            <person name="Parro V."/>
            <person name="Pohl T.M."/>
            <person name="Portetelle D."/>
            <person name="Porwollik S."/>
            <person name="Prescott A.M."/>
            <person name="Presecan E."/>
            <person name="Pujic P."/>
            <person name="Purnelle B."/>
            <person name="Rapoport G."/>
            <person name="Rey M."/>
            <person name="Reynolds S."/>
            <person name="Rieger M."/>
            <person name="Rivolta C."/>
            <person name="Rocha E."/>
            <person name="Roche B."/>
            <person name="Rose M."/>
            <person name="Sadaie Y."/>
            <person name="Sato T."/>
            <person name="Scanlan E."/>
            <person name="Schleich S."/>
            <person name="Schroeter R."/>
            <person name="Scoffone F."/>
            <person name="Sekiguchi J."/>
            <person name="Sekowska A."/>
            <person name="Seror S.J."/>
            <person name="Serror P."/>
            <person name="Shin B.-S."/>
            <person name="Soldo B."/>
            <person name="Sorokin A."/>
            <person name="Tacconi E."/>
            <person name="Takagi T."/>
            <person name="Takahashi H."/>
            <person name="Takemaru K."/>
            <person name="Takeuchi M."/>
            <person name="Tamakoshi A."/>
            <person name="Tanaka T."/>
            <person name="Terpstra P."/>
            <person name="Tognoni A."/>
            <person name="Tosato V."/>
            <person name="Uchiyama S."/>
            <person name="Vandenbol M."/>
            <person name="Vannier F."/>
            <person name="Vassarotti A."/>
            <person name="Viari A."/>
            <person name="Wambutt R."/>
            <person name="Wedler E."/>
            <person name="Wedler H."/>
            <person name="Weitzenegger T."/>
            <person name="Winters P."/>
            <person name="Wipat A."/>
            <person name="Yamamoto H."/>
            <person name="Yamane K."/>
            <person name="Yasumoto K."/>
            <person name="Yata K."/>
            <person name="Yoshida K."/>
            <person name="Yoshikawa H.-F."/>
            <person name="Zumstein E."/>
            <person name="Yoshikawa H."/>
            <person name="Danchin A."/>
        </authorList>
    </citation>
    <scope>NUCLEOTIDE SEQUENCE [LARGE SCALE GENOMIC DNA]</scope>
    <source>
        <strain>168</strain>
    </source>
</reference>
<reference key="2">
    <citation type="journal article" date="2000" name="J. Bacteriol.">
        <title>The Bacillus subtilis yabG gene is transcribed by SigK RNA polymerase during sporulation, and yabG mutant spores have altered coat protein composition.</title>
        <authorList>
            <person name="Takamatsu H."/>
            <person name="Kodama T."/>
            <person name="Imamura A."/>
            <person name="Asai K."/>
            <person name="Kobayashi K."/>
            <person name="Nakayama T."/>
            <person name="Ogasawara N."/>
            <person name="Watabe K."/>
        </authorList>
    </citation>
    <scope>PROTEIN SEQUENCE OF 2-11</scope>
    <scope>AMOUNT IN YABG MUTANT SPORES</scope>
    <source>
        <strain>168</strain>
    </source>
</reference>
<reference key="3">
    <citation type="journal article" date="2009" name="J. Bacteriol.">
        <title>Expression of yeeK during Bacillus subtilis sporulation and localization of YeeK to the inner spore coat using fluorescence microscopy.</title>
        <authorList>
            <person name="Takamatsu H."/>
            <person name="Imamura D."/>
            <person name="Kuwana R."/>
            <person name="Watabe K."/>
        </authorList>
    </citation>
    <scope>FUNCTION</scope>
    <scope>DEVELOPMENTAL STAGE</scope>
    <scope>SUBCELLULAR LOCATION</scope>
    <scope>INDUCTION</scope>
    <scope>DISRUPTION PHENOTYPE</scope>
    <source>
        <strain>168</strain>
    </source>
</reference>
<protein>
    <recommendedName>
        <fullName>Spore coat protein YeeK</fullName>
    </recommendedName>
</protein>
<proteinExistence type="evidence at protein level"/>
<name>YEEK_BACSU</name>
<dbReference type="EMBL" id="AL009126">
    <property type="protein sequence ID" value="CAB12505.2"/>
    <property type="molecule type" value="Genomic_DNA"/>
</dbReference>
<dbReference type="PIR" id="D69793">
    <property type="entry name" value="D69793"/>
</dbReference>
<dbReference type="RefSeq" id="WP_003244206.1">
    <property type="nucleotide sequence ID" value="NZ_OZ025638.1"/>
</dbReference>
<dbReference type="FunCoup" id="O31510">
    <property type="interactions" value="4"/>
</dbReference>
<dbReference type="STRING" id="224308.BSU06850"/>
<dbReference type="PaxDb" id="224308-BSU06850"/>
<dbReference type="EnsemblBacteria" id="CAB12505">
    <property type="protein sequence ID" value="CAB12505"/>
    <property type="gene ID" value="BSU_06850"/>
</dbReference>
<dbReference type="GeneID" id="936073"/>
<dbReference type="KEGG" id="bsu:BSU06850"/>
<dbReference type="PATRIC" id="fig|224308.43.peg.723"/>
<dbReference type="InParanoid" id="O31510"/>
<dbReference type="BioCyc" id="BSUB:BSU06850-MONOMER"/>
<dbReference type="Proteomes" id="UP000001570">
    <property type="component" value="Chromosome"/>
</dbReference>
<dbReference type="GO" id="GO:0030435">
    <property type="term" value="P:sporulation resulting in formation of a cellular spore"/>
    <property type="evidence" value="ECO:0007669"/>
    <property type="project" value="UniProtKB-KW"/>
</dbReference>
<feature type="initiator methionine" description="Removed" evidence="2">
    <location>
        <position position="1"/>
    </location>
</feature>
<feature type="chain" id="PRO_0000246073" description="Spore coat protein YeeK">
    <location>
        <begin position="2"/>
        <end position="145"/>
    </location>
</feature>
<feature type="repeat" description="PG 1">
    <location>
        <begin position="9"/>
        <end position="15"/>
    </location>
</feature>
<feature type="repeat" description="PG 2">
    <location>
        <begin position="22"/>
        <end position="28"/>
    </location>
</feature>
<feature type="repeat" description="PG 3">
    <location>
        <begin position="32"/>
        <end position="38"/>
    </location>
</feature>
<feature type="repeat" description="PG 4">
    <location>
        <begin position="41"/>
        <end position="47"/>
    </location>
</feature>
<feature type="repeat" description="GGY 1">
    <location>
        <begin position="57"/>
        <end position="63"/>
    </location>
</feature>
<feature type="repeat" description="GGY 2">
    <location>
        <begin position="66"/>
        <end position="72"/>
    </location>
</feature>
<feature type="repeat" description="GGY 3">
    <location>
        <begin position="74"/>
        <end position="80"/>
    </location>
</feature>
<feature type="repeat" description="H4 1">
    <location>
        <begin position="99"/>
        <end position="105"/>
    </location>
</feature>
<feature type="repeat" description="H4 1">
    <location>
        <begin position="111"/>
        <end position="117"/>
    </location>
</feature>
<feature type="repeat" description="H4 1">
    <location>
        <begin position="121"/>
        <end position="127"/>
    </location>
</feature>
<feature type="repeat" description="H4 1">
    <location>
        <begin position="131"/>
        <end position="137"/>
    </location>
</feature>
<feature type="region of interest" description="Disordered" evidence="1">
    <location>
        <begin position="100"/>
        <end position="145"/>
    </location>
</feature>
<feature type="compositionally biased region" description="Basic residues" evidence="1">
    <location>
        <begin position="100"/>
        <end position="138"/>
    </location>
</feature>
<comment type="function">
    <text evidence="3">Part of the spore coat.</text>
</comment>
<comment type="subcellular location">
    <subcellularLocation>
        <location evidence="3">Spore coat</location>
    </subcellularLocation>
    <text>Inner spore coat.</text>
</comment>
<comment type="developmental stage">
    <text evidence="3">Expression starts 5 hours after onset of sporulation and peaks at 6 hours after onset.</text>
</comment>
<comment type="induction">
    <text evidence="3">By SigK and GerE.</text>
</comment>
<comment type="disruption phenotype">
    <text evidence="3">No visible effect on vegetative growth, heat resistance of spores or their germination properties.</text>
</comment>
<comment type="miscellaneous">
    <text>Present in an increased level in yabG mutant spores.</text>
</comment>
<organism>
    <name type="scientific">Bacillus subtilis (strain 168)</name>
    <dbReference type="NCBI Taxonomy" id="224308"/>
    <lineage>
        <taxon>Bacteria</taxon>
        <taxon>Bacillati</taxon>
        <taxon>Bacillota</taxon>
        <taxon>Bacilli</taxon>
        <taxon>Bacillales</taxon>
        <taxon>Bacillaceae</taxon>
        <taxon>Bacillus</taxon>
    </lineage>
</organism>
<sequence length="145" mass="15916">MTDTRHMYGGPGFGHYQGFGIGHPGYGMQSTGYPGYGMYGGHPGYGMQGYPDHGIHGGVGGYPGYGGYGGYPSGGYGGSPGTGSYPSMHHENDGHHHYYHHHHDGKDNLHHHHHHVGKDNHHHHHDGHYGHHHHHMGHWGKDGYK</sequence>
<gene>
    <name type="primary">yeeK</name>
    <name type="ordered locus">BSU06850</name>
</gene>
<accession>O31510</accession>